<evidence type="ECO:0000250" key="1"/>
<evidence type="ECO:0000250" key="2">
    <source>
        <dbReference type="UniProtKB" id="Q9JJV3"/>
    </source>
</evidence>
<evidence type="ECO:0000255" key="3"/>
<evidence type="ECO:0000303" key="4">
    <source>
    </source>
</evidence>
<evidence type="ECO:0000305" key="5"/>
<evidence type="ECO:0000312" key="6">
    <source>
        <dbReference type="EMBL" id="AAL50051.1"/>
    </source>
</evidence>
<evidence type="ECO:0000312" key="7">
    <source>
        <dbReference type="HGNC" id="HGNC:18216"/>
    </source>
</evidence>
<accession>Q8WXS4</accession>
<proteinExistence type="evidence at protein level"/>
<comment type="function">
    <text evidence="2">Thought to stabilize the calcium channel in an inactivated (closed) state. Modulates calcium current when coexpressed with CACNA1G (By similarity).</text>
</comment>
<comment type="subunit">
    <text evidence="1">The L-type calcium channel is composed of five subunits: alpha-1, alpha-2/delta, beta and gamma.</text>
</comment>
<comment type="subcellular location">
    <subcellularLocation>
        <location evidence="5">Membrane</location>
        <topology evidence="5">Multi-pass membrane protein</topology>
    </subcellularLocation>
</comment>
<comment type="similarity">
    <text evidence="3">Belongs to the PMP-22/EMP/MP20 family. CACNG subfamily.</text>
</comment>
<sequence>MTAVGVQAQRPLGQRQPRRSFFESFIRTLIITCVALAVVLSSVSICDGHWLLAEDRLFGLWHFCTTTNQTICFRDLGQAHVPGLAVGMGLVRSVGALAVVAAIFGLEFLMVSQLCEDKHSQCKWVMGSILLLVSFVLSSGGLLGFVILLRNQVTLIGFTLMFWCEFTASFLLFLNAISGLHINSITHPWE</sequence>
<gene>
    <name evidence="7" type="primary">TMEM37</name>
    <name evidence="4" type="synonym">PR</name>
</gene>
<reference evidence="6" key="1">
    <citation type="journal article" date="2001" name="Gene">
        <title>Calcium channel gamma subunits provide insights into the evolution of this gene family.</title>
        <authorList>
            <person name="Chu P.-J."/>
            <person name="Robertson H.M."/>
            <person name="Best P.M."/>
        </authorList>
    </citation>
    <scope>NUCLEOTIDE SEQUENCE [MRNA]</scope>
</reference>
<reference key="2">
    <citation type="journal article" date="2005" name="Nature">
        <title>Generation and annotation of the DNA sequences of human chromosomes 2 and 4.</title>
        <authorList>
            <person name="Hillier L.W."/>
            <person name="Graves T.A."/>
            <person name="Fulton R.S."/>
            <person name="Fulton L.A."/>
            <person name="Pepin K.H."/>
            <person name="Minx P."/>
            <person name="Wagner-McPherson C."/>
            <person name="Layman D."/>
            <person name="Wylie K."/>
            <person name="Sekhon M."/>
            <person name="Becker M.C."/>
            <person name="Fewell G.A."/>
            <person name="Delehaunty K.D."/>
            <person name="Miner T.L."/>
            <person name="Nash W.E."/>
            <person name="Kremitzki C."/>
            <person name="Oddy L."/>
            <person name="Du H."/>
            <person name="Sun H."/>
            <person name="Bradshaw-Cordum H."/>
            <person name="Ali J."/>
            <person name="Carter J."/>
            <person name="Cordes M."/>
            <person name="Harris A."/>
            <person name="Isak A."/>
            <person name="van Brunt A."/>
            <person name="Nguyen C."/>
            <person name="Du F."/>
            <person name="Courtney L."/>
            <person name="Kalicki J."/>
            <person name="Ozersky P."/>
            <person name="Abbott S."/>
            <person name="Armstrong J."/>
            <person name="Belter E.A."/>
            <person name="Caruso L."/>
            <person name="Cedroni M."/>
            <person name="Cotton M."/>
            <person name="Davidson T."/>
            <person name="Desai A."/>
            <person name="Elliott G."/>
            <person name="Erb T."/>
            <person name="Fronick C."/>
            <person name="Gaige T."/>
            <person name="Haakenson W."/>
            <person name="Haglund K."/>
            <person name="Holmes A."/>
            <person name="Harkins R."/>
            <person name="Kim K."/>
            <person name="Kruchowski S.S."/>
            <person name="Strong C.M."/>
            <person name="Grewal N."/>
            <person name="Goyea E."/>
            <person name="Hou S."/>
            <person name="Levy A."/>
            <person name="Martinka S."/>
            <person name="Mead K."/>
            <person name="McLellan M.D."/>
            <person name="Meyer R."/>
            <person name="Randall-Maher J."/>
            <person name="Tomlinson C."/>
            <person name="Dauphin-Kohlberg S."/>
            <person name="Kozlowicz-Reilly A."/>
            <person name="Shah N."/>
            <person name="Swearengen-Shahid S."/>
            <person name="Snider J."/>
            <person name="Strong J.T."/>
            <person name="Thompson J."/>
            <person name="Yoakum M."/>
            <person name="Leonard S."/>
            <person name="Pearman C."/>
            <person name="Trani L."/>
            <person name="Radionenko M."/>
            <person name="Waligorski J.E."/>
            <person name="Wang C."/>
            <person name="Rock S.M."/>
            <person name="Tin-Wollam A.-M."/>
            <person name="Maupin R."/>
            <person name="Latreille P."/>
            <person name="Wendl M.C."/>
            <person name="Yang S.-P."/>
            <person name="Pohl C."/>
            <person name="Wallis J.W."/>
            <person name="Spieth J."/>
            <person name="Bieri T.A."/>
            <person name="Berkowicz N."/>
            <person name="Nelson J.O."/>
            <person name="Osborne J."/>
            <person name="Ding L."/>
            <person name="Meyer R."/>
            <person name="Sabo A."/>
            <person name="Shotland Y."/>
            <person name="Sinha P."/>
            <person name="Wohldmann P.E."/>
            <person name="Cook L.L."/>
            <person name="Hickenbotham M.T."/>
            <person name="Eldred J."/>
            <person name="Williams D."/>
            <person name="Jones T.A."/>
            <person name="She X."/>
            <person name="Ciccarelli F.D."/>
            <person name="Izaurralde E."/>
            <person name="Taylor J."/>
            <person name="Schmutz J."/>
            <person name="Myers R.M."/>
            <person name="Cox D.R."/>
            <person name="Huang X."/>
            <person name="McPherson J.D."/>
            <person name="Mardis E.R."/>
            <person name="Clifton S.W."/>
            <person name="Warren W.C."/>
            <person name="Chinwalla A.T."/>
            <person name="Eddy S.R."/>
            <person name="Marra M.A."/>
            <person name="Ovcharenko I."/>
            <person name="Furey T.S."/>
            <person name="Miller W."/>
            <person name="Eichler E.E."/>
            <person name="Bork P."/>
            <person name="Suyama M."/>
            <person name="Torrents D."/>
            <person name="Waterston R.H."/>
            <person name="Wilson R.K."/>
        </authorList>
    </citation>
    <scope>NUCLEOTIDE SEQUENCE [LARGE SCALE GENOMIC DNA]</scope>
</reference>
<protein>
    <recommendedName>
        <fullName evidence="4">Voltage-dependent calcium channel gamma-like subunit</fullName>
    </recommendedName>
    <alternativeName>
        <fullName>Neuronal voltage-gated calcium channel gamma-like subunit</fullName>
    </alternativeName>
    <alternativeName>
        <fullName>Transmembrane protein 37</fullName>
    </alternativeName>
</protein>
<keyword id="KW-0106">Calcium</keyword>
<keyword id="KW-0107">Calcium channel</keyword>
<keyword id="KW-0109">Calcium transport</keyword>
<keyword id="KW-0407">Ion channel</keyword>
<keyword id="KW-0406">Ion transport</keyword>
<keyword id="KW-0472">Membrane</keyword>
<keyword id="KW-1267">Proteomics identification</keyword>
<keyword id="KW-1185">Reference proteome</keyword>
<keyword id="KW-0812">Transmembrane</keyword>
<keyword id="KW-1133">Transmembrane helix</keyword>
<keyword id="KW-0813">Transport</keyword>
<keyword id="KW-0851">Voltage-gated channel</keyword>
<name>CCGL_HUMAN</name>
<feature type="chain" id="PRO_0000225601" description="Voltage-dependent calcium channel gamma-like subunit">
    <location>
        <begin position="1"/>
        <end position="190"/>
    </location>
</feature>
<feature type="transmembrane region" description="Helical" evidence="3">
    <location>
        <begin position="25"/>
        <end position="45"/>
    </location>
</feature>
<feature type="transmembrane region" description="Helical" evidence="3">
    <location>
        <begin position="96"/>
        <end position="116"/>
    </location>
</feature>
<feature type="transmembrane region" description="Helical" evidence="3">
    <location>
        <begin position="131"/>
        <end position="151"/>
    </location>
</feature>
<feature type="transmembrane region" description="Helical" evidence="3">
    <location>
        <begin position="155"/>
        <end position="175"/>
    </location>
</feature>
<feature type="sequence conflict" description="In Ref. 1; AAL50051." evidence="5" ref="1">
    <original>Q</original>
    <variation>H</variation>
    <location>
        <position position="7"/>
    </location>
</feature>
<feature type="sequence conflict" description="In Ref. 1; AAL50051." evidence="5" ref="1">
    <original>T</original>
    <variation>SVP</variation>
    <location>
        <position position="70"/>
    </location>
</feature>
<organism>
    <name type="scientific">Homo sapiens</name>
    <name type="common">Human</name>
    <dbReference type="NCBI Taxonomy" id="9606"/>
    <lineage>
        <taxon>Eukaryota</taxon>
        <taxon>Metazoa</taxon>
        <taxon>Chordata</taxon>
        <taxon>Craniata</taxon>
        <taxon>Vertebrata</taxon>
        <taxon>Euteleostomi</taxon>
        <taxon>Mammalia</taxon>
        <taxon>Eutheria</taxon>
        <taxon>Euarchontoglires</taxon>
        <taxon>Primates</taxon>
        <taxon>Haplorrhini</taxon>
        <taxon>Catarrhini</taxon>
        <taxon>Hominidae</taxon>
        <taxon>Homo</taxon>
    </lineage>
</organism>
<dbReference type="EMBL" id="AF361356">
    <property type="protein sequence ID" value="AAL50051.1"/>
    <property type="molecule type" value="mRNA"/>
</dbReference>
<dbReference type="EMBL" id="AC013275">
    <property type="status" value="NOT_ANNOTATED_CDS"/>
    <property type="molecule type" value="Genomic_DNA"/>
</dbReference>
<dbReference type="CCDS" id="CCDS33281.1"/>
<dbReference type="RefSeq" id="NP_899063.2">
    <property type="nucleotide sequence ID" value="NM_183240.3"/>
</dbReference>
<dbReference type="BioGRID" id="126681">
    <property type="interactions" value="7"/>
</dbReference>
<dbReference type="FunCoup" id="Q8WXS4">
    <property type="interactions" value="25"/>
</dbReference>
<dbReference type="IntAct" id="Q8WXS4">
    <property type="interactions" value="6"/>
</dbReference>
<dbReference type="STRING" id="9606.ENSP00000303148"/>
<dbReference type="PhosphoSitePlus" id="Q8WXS4"/>
<dbReference type="BioMuta" id="TMEM37"/>
<dbReference type="DMDM" id="296434430"/>
<dbReference type="MassIVE" id="Q8WXS4"/>
<dbReference type="PaxDb" id="9606-ENSP00000303148"/>
<dbReference type="PeptideAtlas" id="Q8WXS4"/>
<dbReference type="ProteomicsDB" id="75094"/>
<dbReference type="Antibodypedia" id="33375">
    <property type="antibodies" value="79 antibodies from 22 providers"/>
</dbReference>
<dbReference type="DNASU" id="140738"/>
<dbReference type="Ensembl" id="ENST00000306406.5">
    <property type="protein sequence ID" value="ENSP00000303148.4"/>
    <property type="gene ID" value="ENSG00000171227.7"/>
</dbReference>
<dbReference type="GeneID" id="140738"/>
<dbReference type="KEGG" id="hsa:140738"/>
<dbReference type="MANE-Select" id="ENST00000306406.5">
    <property type="protein sequence ID" value="ENSP00000303148.4"/>
    <property type="RefSeq nucleotide sequence ID" value="NM_183240.3"/>
    <property type="RefSeq protein sequence ID" value="NP_899063.2"/>
</dbReference>
<dbReference type="UCSC" id="uc002tly.4">
    <property type="organism name" value="human"/>
</dbReference>
<dbReference type="AGR" id="HGNC:18216"/>
<dbReference type="CTD" id="140738"/>
<dbReference type="DisGeNET" id="140738"/>
<dbReference type="GeneCards" id="TMEM37"/>
<dbReference type="HGNC" id="HGNC:18216">
    <property type="gene designation" value="TMEM37"/>
</dbReference>
<dbReference type="HPA" id="ENSG00000171227">
    <property type="expression patterns" value="Tissue enhanced (kidney, liver, parathyroid gland)"/>
</dbReference>
<dbReference type="MIM" id="618831">
    <property type="type" value="gene"/>
</dbReference>
<dbReference type="neXtProt" id="NX_Q8WXS4"/>
<dbReference type="OpenTargets" id="ENSG00000171227"/>
<dbReference type="PharmGKB" id="PA134897608"/>
<dbReference type="VEuPathDB" id="HostDB:ENSG00000171227"/>
<dbReference type="eggNOG" id="ENOG502S0PU">
    <property type="taxonomic scope" value="Eukaryota"/>
</dbReference>
<dbReference type="GeneTree" id="ENSGT00390000006225"/>
<dbReference type="HOGENOM" id="CLU_1383775_0_0_1"/>
<dbReference type="InParanoid" id="Q8WXS4"/>
<dbReference type="OrthoDB" id="9903296at2759"/>
<dbReference type="PAN-GO" id="Q8WXS4">
    <property type="GO annotations" value="0 GO annotations based on evolutionary models"/>
</dbReference>
<dbReference type="PhylomeDB" id="Q8WXS4"/>
<dbReference type="TreeFam" id="TF333259"/>
<dbReference type="PathwayCommons" id="Q8WXS4"/>
<dbReference type="SignaLink" id="Q8WXS4"/>
<dbReference type="BioGRID-ORCS" id="140738">
    <property type="hits" value="13 hits in 1148 CRISPR screens"/>
</dbReference>
<dbReference type="ChiTaRS" id="TMEM37">
    <property type="organism name" value="human"/>
</dbReference>
<dbReference type="GenomeRNAi" id="140738"/>
<dbReference type="Pharos" id="Q8WXS4">
    <property type="development level" value="Tbio"/>
</dbReference>
<dbReference type="PRO" id="PR:Q8WXS4"/>
<dbReference type="Proteomes" id="UP000005640">
    <property type="component" value="Chromosome 2"/>
</dbReference>
<dbReference type="RNAct" id="Q8WXS4">
    <property type="molecule type" value="protein"/>
</dbReference>
<dbReference type="Bgee" id="ENSG00000171227">
    <property type="expression patterns" value="Expressed in kidney epithelium and 152 other cell types or tissues"/>
</dbReference>
<dbReference type="ExpressionAtlas" id="Q8WXS4">
    <property type="expression patterns" value="baseline and differential"/>
</dbReference>
<dbReference type="GO" id="GO:0034702">
    <property type="term" value="C:monoatomic ion channel complex"/>
    <property type="evidence" value="ECO:0007669"/>
    <property type="project" value="UniProtKB-KW"/>
</dbReference>
<dbReference type="GO" id="GO:0005262">
    <property type="term" value="F:calcium channel activity"/>
    <property type="evidence" value="ECO:0007669"/>
    <property type="project" value="UniProtKB-KW"/>
</dbReference>
<dbReference type="GO" id="GO:0005244">
    <property type="term" value="F:voltage-gated monoatomic ion channel activity"/>
    <property type="evidence" value="ECO:0007669"/>
    <property type="project" value="InterPro"/>
</dbReference>
<dbReference type="InterPro" id="IPR029372">
    <property type="entry name" value="Tmem37"/>
</dbReference>
<dbReference type="PANTHER" id="PTHR31767">
    <property type="entry name" value="VOLTAGE-DEPENDENT CALCIUM CHANNEL GAMMA-LIKE SUBUNIT"/>
    <property type="match status" value="1"/>
</dbReference>
<dbReference type="PANTHER" id="PTHR31767:SF0">
    <property type="entry name" value="VOLTAGE-DEPENDENT CALCIUM CHANNEL GAMMA-LIKE SUBUNIT"/>
    <property type="match status" value="1"/>
</dbReference>
<dbReference type="Pfam" id="PF15108">
    <property type="entry name" value="TMEM37"/>
    <property type="match status" value="1"/>
</dbReference>